<reference key="1">
    <citation type="journal article" date="1997" name="Nature">
        <title>The complete genome sequence of the hyperthermophilic, sulphate-reducing archaeon Archaeoglobus fulgidus.</title>
        <authorList>
            <person name="Klenk H.-P."/>
            <person name="Clayton R.A."/>
            <person name="Tomb J.-F."/>
            <person name="White O."/>
            <person name="Nelson K.E."/>
            <person name="Ketchum K.A."/>
            <person name="Dodson R.J."/>
            <person name="Gwinn M.L."/>
            <person name="Hickey E.K."/>
            <person name="Peterson J.D."/>
            <person name="Richardson D.L."/>
            <person name="Kerlavage A.R."/>
            <person name="Graham D.E."/>
            <person name="Kyrpides N.C."/>
            <person name="Fleischmann R.D."/>
            <person name="Quackenbush J."/>
            <person name="Lee N.H."/>
            <person name="Sutton G.G."/>
            <person name="Gill S.R."/>
            <person name="Kirkness E.F."/>
            <person name="Dougherty B.A."/>
            <person name="McKenney K."/>
            <person name="Adams M.D."/>
            <person name="Loftus B.J."/>
            <person name="Peterson S.N."/>
            <person name="Reich C.I."/>
            <person name="McNeil L.K."/>
            <person name="Badger J.H."/>
            <person name="Glodek A."/>
            <person name="Zhou L."/>
            <person name="Overbeek R."/>
            <person name="Gocayne J.D."/>
            <person name="Weidman J.F."/>
            <person name="McDonald L.A."/>
            <person name="Utterback T.R."/>
            <person name="Cotton M.D."/>
            <person name="Spriggs T."/>
            <person name="Artiach P."/>
            <person name="Kaine B.P."/>
            <person name="Sykes S.M."/>
            <person name="Sadow P.W."/>
            <person name="D'Andrea K.P."/>
            <person name="Bowman C."/>
            <person name="Fujii C."/>
            <person name="Garland S.A."/>
            <person name="Mason T.M."/>
            <person name="Olsen G.J."/>
            <person name="Fraser C.M."/>
            <person name="Smith H.O."/>
            <person name="Woese C.R."/>
            <person name="Venter J.C."/>
        </authorList>
    </citation>
    <scope>NUCLEOTIDE SEQUENCE [LARGE SCALE GENOMIC DNA]</scope>
    <source>
        <strain>ATCC 49558 / DSM 4304 / JCM 9628 / NBRC 100126 / VC-16</strain>
    </source>
</reference>
<accession>O28726</accession>
<sequence length="283" mass="31734">MGIMIDVLNYKLYGDVTVYDIIVVIVVMALATIIAKLITTNLRRALIDKMKRDQLELMLKVIYFGIIIVAFIAVLPALGLDLSGLLVAGGITGIVLGFASQSVVANLVSGIFLISEKPIKIGDQVNIDGVAGFVEDVNILSTIIRTYDGLYVRIPNEKVFTSNITNYVAHIARRFEYVVGIRYSDDAEKAIEIIKRIIEEHPFALKNPEPVVFVDNLGDSSVNIVVRIWAPSTEWYNVKMELLWKIKTELEKNGIEIPFPQRVVWFANELRANVEGKEERRQA</sequence>
<comment type="subcellular location">
    <subcellularLocation>
        <location evidence="2">Cell membrane</location>
        <topology evidence="2">Multi-pass membrane protein</topology>
    </subcellularLocation>
</comment>
<comment type="similarity">
    <text evidence="2">Belongs to the MscS (TC 1.A.23) family.</text>
</comment>
<proteinExistence type="inferred from homology"/>
<gene>
    <name type="ordered locus">AF_1546</name>
</gene>
<protein>
    <recommendedName>
        <fullName>Uncharacterized MscS family protein AF_1546</fullName>
    </recommendedName>
</protein>
<organism>
    <name type="scientific">Archaeoglobus fulgidus (strain ATCC 49558 / DSM 4304 / JCM 9628 / NBRC 100126 / VC-16)</name>
    <dbReference type="NCBI Taxonomy" id="224325"/>
    <lineage>
        <taxon>Archaea</taxon>
        <taxon>Methanobacteriati</taxon>
        <taxon>Methanobacteriota</taxon>
        <taxon>Archaeoglobi</taxon>
        <taxon>Archaeoglobales</taxon>
        <taxon>Archaeoglobaceae</taxon>
        <taxon>Archaeoglobus</taxon>
    </lineage>
</organism>
<name>Y1546_ARCFU</name>
<evidence type="ECO:0000255" key="1"/>
<evidence type="ECO:0000305" key="2"/>
<feature type="chain" id="PRO_0000110252" description="Uncharacterized MscS family protein AF_1546">
    <location>
        <begin position="1"/>
        <end position="283"/>
    </location>
</feature>
<feature type="transmembrane region" description="Helical" evidence="1">
    <location>
        <begin position="18"/>
        <end position="38"/>
    </location>
</feature>
<feature type="transmembrane region" description="Helical" evidence="1">
    <location>
        <begin position="61"/>
        <end position="81"/>
    </location>
</feature>
<feature type="transmembrane region" description="Helical" evidence="1">
    <location>
        <begin position="94"/>
        <end position="114"/>
    </location>
</feature>
<keyword id="KW-1003">Cell membrane</keyword>
<keyword id="KW-0472">Membrane</keyword>
<keyword id="KW-1185">Reference proteome</keyword>
<keyword id="KW-0812">Transmembrane</keyword>
<keyword id="KW-1133">Transmembrane helix</keyword>
<dbReference type="EMBL" id="AE000782">
    <property type="protein sequence ID" value="AAB89702.1"/>
    <property type="molecule type" value="Genomic_DNA"/>
</dbReference>
<dbReference type="PIR" id="A69443">
    <property type="entry name" value="A69443"/>
</dbReference>
<dbReference type="SMR" id="O28726"/>
<dbReference type="STRING" id="224325.AF_1546"/>
<dbReference type="PaxDb" id="224325-AF_1546"/>
<dbReference type="EnsemblBacteria" id="AAB89702">
    <property type="protein sequence ID" value="AAB89702"/>
    <property type="gene ID" value="AF_1546"/>
</dbReference>
<dbReference type="KEGG" id="afu:AF_1546"/>
<dbReference type="eggNOG" id="arCOG01568">
    <property type="taxonomic scope" value="Archaea"/>
</dbReference>
<dbReference type="HOGENOM" id="CLU_037945_1_0_2"/>
<dbReference type="PhylomeDB" id="O28726"/>
<dbReference type="Proteomes" id="UP000002199">
    <property type="component" value="Chromosome"/>
</dbReference>
<dbReference type="GO" id="GO:0005886">
    <property type="term" value="C:plasma membrane"/>
    <property type="evidence" value="ECO:0007669"/>
    <property type="project" value="UniProtKB-SubCell"/>
</dbReference>
<dbReference type="GO" id="GO:0008381">
    <property type="term" value="F:mechanosensitive monoatomic ion channel activity"/>
    <property type="evidence" value="ECO:0007669"/>
    <property type="project" value="InterPro"/>
</dbReference>
<dbReference type="Gene3D" id="1.10.287.1260">
    <property type="match status" value="1"/>
</dbReference>
<dbReference type="Gene3D" id="2.30.30.60">
    <property type="match status" value="1"/>
</dbReference>
<dbReference type="Gene3D" id="3.30.70.100">
    <property type="match status" value="1"/>
</dbReference>
<dbReference type="InterPro" id="IPR010920">
    <property type="entry name" value="LSM_dom_sf"/>
</dbReference>
<dbReference type="InterPro" id="IPR049142">
    <property type="entry name" value="MS_channel_1st"/>
</dbReference>
<dbReference type="InterPro" id="IPR049278">
    <property type="entry name" value="MS_channel_C"/>
</dbReference>
<dbReference type="InterPro" id="IPR045275">
    <property type="entry name" value="MscS_archaea/bacteria_type"/>
</dbReference>
<dbReference type="InterPro" id="IPR023408">
    <property type="entry name" value="MscS_beta-dom_sf"/>
</dbReference>
<dbReference type="InterPro" id="IPR006685">
    <property type="entry name" value="MscS_channel_2nd"/>
</dbReference>
<dbReference type="InterPro" id="IPR011066">
    <property type="entry name" value="MscS_channel_C_sf"/>
</dbReference>
<dbReference type="InterPro" id="IPR006686">
    <property type="entry name" value="MscS_channel_CS"/>
</dbReference>
<dbReference type="InterPro" id="IPR011014">
    <property type="entry name" value="MscS_channel_TM-2"/>
</dbReference>
<dbReference type="PANTHER" id="PTHR30221">
    <property type="entry name" value="SMALL-CONDUCTANCE MECHANOSENSITIVE CHANNEL"/>
    <property type="match status" value="1"/>
</dbReference>
<dbReference type="PANTHER" id="PTHR30221:SF20">
    <property type="entry name" value="SMALL-CONDUCTANCE MECHANOSENSITIVE CHANNEL"/>
    <property type="match status" value="1"/>
</dbReference>
<dbReference type="Pfam" id="PF21088">
    <property type="entry name" value="MS_channel_1st"/>
    <property type="match status" value="1"/>
</dbReference>
<dbReference type="Pfam" id="PF00924">
    <property type="entry name" value="MS_channel_2nd"/>
    <property type="match status" value="1"/>
</dbReference>
<dbReference type="Pfam" id="PF21082">
    <property type="entry name" value="MS_channel_3rd"/>
    <property type="match status" value="1"/>
</dbReference>
<dbReference type="SUPFAM" id="SSF82689">
    <property type="entry name" value="Mechanosensitive channel protein MscS (YggB), C-terminal domain"/>
    <property type="match status" value="1"/>
</dbReference>
<dbReference type="SUPFAM" id="SSF82861">
    <property type="entry name" value="Mechanosensitive channel protein MscS (YggB), transmembrane region"/>
    <property type="match status" value="1"/>
</dbReference>
<dbReference type="SUPFAM" id="SSF50182">
    <property type="entry name" value="Sm-like ribonucleoproteins"/>
    <property type="match status" value="1"/>
</dbReference>
<dbReference type="PROSITE" id="PS01246">
    <property type="entry name" value="UPF0003"/>
    <property type="match status" value="1"/>
</dbReference>